<protein>
    <recommendedName>
        <fullName evidence="1">Deoxyguanosinetriphosphate triphosphohydrolase-like protein</fullName>
    </recommendedName>
</protein>
<proteinExistence type="inferred from homology"/>
<gene>
    <name type="primary">dgt</name>
    <name type="ordered locus">VC0395_A1566</name>
    <name type="ordered locus">VC395_2094</name>
</gene>
<organism>
    <name type="scientific">Vibrio cholerae serotype O1 (strain ATCC 39541 / Classical Ogawa 395 / O395)</name>
    <dbReference type="NCBI Taxonomy" id="345073"/>
    <lineage>
        <taxon>Bacteria</taxon>
        <taxon>Pseudomonadati</taxon>
        <taxon>Pseudomonadota</taxon>
        <taxon>Gammaproteobacteria</taxon>
        <taxon>Vibrionales</taxon>
        <taxon>Vibrionaceae</taxon>
        <taxon>Vibrio</taxon>
    </lineage>
</organism>
<accession>A5F6T5</accession>
<accession>C3M231</accession>
<keyword id="KW-0378">Hydrolase</keyword>
<dbReference type="EMBL" id="CP000627">
    <property type="protein sequence ID" value="ABQ20158.1"/>
    <property type="molecule type" value="Genomic_DNA"/>
</dbReference>
<dbReference type="EMBL" id="CP001235">
    <property type="protein sequence ID" value="ACP10086.1"/>
    <property type="molecule type" value="Genomic_DNA"/>
</dbReference>
<dbReference type="RefSeq" id="WP_001198175.1">
    <property type="nucleotide sequence ID" value="NC_009457.1"/>
</dbReference>
<dbReference type="SMR" id="A5F6T5"/>
<dbReference type="KEGG" id="vco:VC0395_A1566"/>
<dbReference type="KEGG" id="vcr:VC395_2094"/>
<dbReference type="PATRIC" id="fig|345073.21.peg.2022"/>
<dbReference type="eggNOG" id="COG0232">
    <property type="taxonomic scope" value="Bacteria"/>
</dbReference>
<dbReference type="HOGENOM" id="CLU_028163_0_0_6"/>
<dbReference type="OrthoDB" id="9803619at2"/>
<dbReference type="Proteomes" id="UP000000249">
    <property type="component" value="Chromosome 2"/>
</dbReference>
<dbReference type="GO" id="GO:0008832">
    <property type="term" value="F:dGTPase activity"/>
    <property type="evidence" value="ECO:0007669"/>
    <property type="project" value="TreeGrafter"/>
</dbReference>
<dbReference type="GO" id="GO:0006203">
    <property type="term" value="P:dGTP catabolic process"/>
    <property type="evidence" value="ECO:0007669"/>
    <property type="project" value="TreeGrafter"/>
</dbReference>
<dbReference type="CDD" id="cd00077">
    <property type="entry name" value="HDc"/>
    <property type="match status" value="1"/>
</dbReference>
<dbReference type="Gene3D" id="1.10.3210.10">
    <property type="entry name" value="Hypothetical protein af1432"/>
    <property type="match status" value="1"/>
</dbReference>
<dbReference type="HAMAP" id="MF_01212">
    <property type="entry name" value="dGTPase_type2"/>
    <property type="match status" value="1"/>
</dbReference>
<dbReference type="InterPro" id="IPR006261">
    <property type="entry name" value="dGTPase"/>
</dbReference>
<dbReference type="InterPro" id="IPR050135">
    <property type="entry name" value="dGTPase-like"/>
</dbReference>
<dbReference type="InterPro" id="IPR023023">
    <property type="entry name" value="dNTPase_2"/>
</dbReference>
<dbReference type="InterPro" id="IPR003607">
    <property type="entry name" value="HD/PDEase_dom"/>
</dbReference>
<dbReference type="InterPro" id="IPR006674">
    <property type="entry name" value="HD_domain"/>
</dbReference>
<dbReference type="InterPro" id="IPR026875">
    <property type="entry name" value="PHydrolase_assoc_dom"/>
</dbReference>
<dbReference type="NCBIfam" id="NF041026">
    <property type="entry name" value="antiphage_dGTPase"/>
    <property type="match status" value="1"/>
</dbReference>
<dbReference type="NCBIfam" id="TIGR01353">
    <property type="entry name" value="dGTP_triPase"/>
    <property type="match status" value="1"/>
</dbReference>
<dbReference type="NCBIfam" id="NF003701">
    <property type="entry name" value="PRK05318.1"/>
    <property type="match status" value="1"/>
</dbReference>
<dbReference type="PANTHER" id="PTHR11373:SF40">
    <property type="entry name" value="DEOXYGUANOSINETRIPHOSPHATE TRIPHOSPHOHYDROLASE-LIKE PROTEIN 2"/>
    <property type="match status" value="1"/>
</dbReference>
<dbReference type="PANTHER" id="PTHR11373">
    <property type="entry name" value="DEOXYNUCLEOSIDE TRIPHOSPHATE TRIPHOSPHOHYDROLASE"/>
    <property type="match status" value="1"/>
</dbReference>
<dbReference type="Pfam" id="PF13286">
    <property type="entry name" value="HD_assoc"/>
    <property type="match status" value="1"/>
</dbReference>
<dbReference type="SMART" id="SM00471">
    <property type="entry name" value="HDc"/>
    <property type="match status" value="1"/>
</dbReference>
<dbReference type="SUPFAM" id="SSF109604">
    <property type="entry name" value="HD-domain/PDEase-like"/>
    <property type="match status" value="1"/>
</dbReference>
<dbReference type="PROSITE" id="PS51831">
    <property type="entry name" value="HD"/>
    <property type="match status" value="1"/>
</dbReference>
<name>DGTL1_VIBC3</name>
<comment type="similarity">
    <text evidence="1">Belongs to the dGTPase family. Type 2 subfamily.</text>
</comment>
<evidence type="ECO:0000255" key="1">
    <source>
        <dbReference type="HAMAP-Rule" id="MF_01212"/>
    </source>
</evidence>
<evidence type="ECO:0000255" key="2">
    <source>
        <dbReference type="PROSITE-ProRule" id="PRU01175"/>
    </source>
</evidence>
<reference key="1">
    <citation type="submission" date="2007-03" db="EMBL/GenBank/DDBJ databases">
        <authorList>
            <person name="Heidelberg J."/>
        </authorList>
    </citation>
    <scope>NUCLEOTIDE SEQUENCE [LARGE SCALE GENOMIC DNA]</scope>
    <source>
        <strain>ATCC 39541 / Classical Ogawa 395 / O395</strain>
    </source>
</reference>
<reference key="2">
    <citation type="journal article" date="2008" name="PLoS ONE">
        <title>A recalibrated molecular clock and independent origins for the cholera pandemic clones.</title>
        <authorList>
            <person name="Feng L."/>
            <person name="Reeves P.R."/>
            <person name="Lan R."/>
            <person name="Ren Y."/>
            <person name="Gao C."/>
            <person name="Zhou Z."/>
            <person name="Ren Y."/>
            <person name="Cheng J."/>
            <person name="Wang W."/>
            <person name="Wang J."/>
            <person name="Qian W."/>
            <person name="Li D."/>
            <person name="Wang L."/>
        </authorList>
    </citation>
    <scope>NUCLEOTIDE SEQUENCE [LARGE SCALE GENOMIC DNA]</scope>
    <source>
        <strain>ATCC 39541 / Classical Ogawa 395 / O395</strain>
    </source>
</reference>
<feature type="chain" id="PRO_1000138938" description="Deoxyguanosinetriphosphate triphosphohydrolase-like protein">
    <location>
        <begin position="1"/>
        <end position="441"/>
    </location>
</feature>
<feature type="domain" description="HD" evidence="2">
    <location>
        <begin position="62"/>
        <end position="255"/>
    </location>
</feature>
<sequence length="441" mass="49897">MQVSLNPEWLARNNDEHKIRRNDHRSPFQRDRARILHSAAFRRLQAKTQVHGTSLNDFHRTRLTHSLEAAQIGTGIVAQIKLKQPEFRELLPSDSLIDSLCLAHDIGHPPYGHGGEIALNYMMRDHGGFEGNAQTFRIVTSLEPYTEHHGMNLSRRTLLGLLKYPALLSATRAAIPPPAVAHQRQLKAKDWSPAKGIYDCDLASLDWVLEPLCESDRELLGQMRAEPSSPKEHRKTRFKSLDCSIMELADDIAYGVHDLEDAIVLGMVTRAQWQEAAAAQLAECGDPWFEEHIAELSEMLFSGKHYVCKDAIGGIVNALLTSISVKPVEAPFHNELLAFNAYIEPHMGNALEVLKHFVSQYVIQIPQVQRFEYKGQQLIMDLFEALSADPERLLPQATGEKWRKAQEQDEGMRVICDYIAAMTDAYAQRLHQQLFSAQSHY</sequence>